<keyword id="KW-0028">Amino-acid biosynthesis</keyword>
<keyword id="KW-0057">Aromatic amino acid biosynthesis</keyword>
<keyword id="KW-0456">Lyase</keyword>
<keyword id="KW-1185">Reference proteome</keyword>
<keyword id="KW-0822">Tryptophan biosynthesis</keyword>
<name>TRPA_DESAL</name>
<dbReference type="EC" id="4.2.1.20" evidence="1"/>
<dbReference type="EMBL" id="CP001322">
    <property type="protein sequence ID" value="ACL03133.1"/>
    <property type="molecule type" value="Genomic_DNA"/>
</dbReference>
<dbReference type="RefSeq" id="WP_012610568.1">
    <property type="nucleotide sequence ID" value="NC_011768.1"/>
</dbReference>
<dbReference type="SMR" id="B8FA37"/>
<dbReference type="KEGG" id="dal:Dalk_1433"/>
<dbReference type="eggNOG" id="COG0159">
    <property type="taxonomic scope" value="Bacteria"/>
</dbReference>
<dbReference type="HOGENOM" id="CLU_016734_0_2_7"/>
<dbReference type="UniPathway" id="UPA00035">
    <property type="reaction ID" value="UER00044"/>
</dbReference>
<dbReference type="Proteomes" id="UP000000739">
    <property type="component" value="Chromosome"/>
</dbReference>
<dbReference type="GO" id="GO:0005829">
    <property type="term" value="C:cytosol"/>
    <property type="evidence" value="ECO:0007669"/>
    <property type="project" value="TreeGrafter"/>
</dbReference>
<dbReference type="GO" id="GO:0004834">
    <property type="term" value="F:tryptophan synthase activity"/>
    <property type="evidence" value="ECO:0007669"/>
    <property type="project" value="UniProtKB-UniRule"/>
</dbReference>
<dbReference type="CDD" id="cd04724">
    <property type="entry name" value="Tryptophan_synthase_alpha"/>
    <property type="match status" value="1"/>
</dbReference>
<dbReference type="FunFam" id="3.20.20.70:FF:000037">
    <property type="entry name" value="Tryptophan synthase alpha chain"/>
    <property type="match status" value="1"/>
</dbReference>
<dbReference type="Gene3D" id="3.20.20.70">
    <property type="entry name" value="Aldolase class I"/>
    <property type="match status" value="1"/>
</dbReference>
<dbReference type="HAMAP" id="MF_00131">
    <property type="entry name" value="Trp_synth_alpha"/>
    <property type="match status" value="1"/>
</dbReference>
<dbReference type="InterPro" id="IPR013785">
    <property type="entry name" value="Aldolase_TIM"/>
</dbReference>
<dbReference type="InterPro" id="IPR011060">
    <property type="entry name" value="RibuloseP-bd_barrel"/>
</dbReference>
<dbReference type="InterPro" id="IPR002028">
    <property type="entry name" value="Trp_synthase_suA"/>
</dbReference>
<dbReference type="NCBIfam" id="TIGR00262">
    <property type="entry name" value="trpA"/>
    <property type="match status" value="1"/>
</dbReference>
<dbReference type="PANTHER" id="PTHR43406:SF1">
    <property type="entry name" value="TRYPTOPHAN SYNTHASE ALPHA CHAIN, CHLOROPLASTIC"/>
    <property type="match status" value="1"/>
</dbReference>
<dbReference type="PANTHER" id="PTHR43406">
    <property type="entry name" value="TRYPTOPHAN SYNTHASE, ALPHA CHAIN"/>
    <property type="match status" value="1"/>
</dbReference>
<dbReference type="Pfam" id="PF00290">
    <property type="entry name" value="Trp_syntA"/>
    <property type="match status" value="1"/>
</dbReference>
<dbReference type="SUPFAM" id="SSF51366">
    <property type="entry name" value="Ribulose-phoshate binding barrel"/>
    <property type="match status" value="1"/>
</dbReference>
<accession>B8FA37</accession>
<gene>
    <name evidence="1" type="primary">trpA</name>
    <name type="ordered locus">Dalk_1433</name>
</gene>
<organism>
    <name type="scientific">Desulfatibacillum aliphaticivorans</name>
    <dbReference type="NCBI Taxonomy" id="218208"/>
    <lineage>
        <taxon>Bacteria</taxon>
        <taxon>Pseudomonadati</taxon>
        <taxon>Thermodesulfobacteriota</taxon>
        <taxon>Desulfobacteria</taxon>
        <taxon>Desulfobacterales</taxon>
        <taxon>Desulfatibacillaceae</taxon>
        <taxon>Desulfatibacillum</taxon>
    </lineage>
</organism>
<protein>
    <recommendedName>
        <fullName evidence="1">Tryptophan synthase alpha chain</fullName>
        <ecNumber evidence="1">4.2.1.20</ecNumber>
    </recommendedName>
</protein>
<reference key="1">
    <citation type="journal article" date="2012" name="Environ. Microbiol.">
        <title>The genome sequence of Desulfatibacillum alkenivorans AK-01: a blueprint for anaerobic alkane oxidation.</title>
        <authorList>
            <person name="Callaghan A.V."/>
            <person name="Morris B.E."/>
            <person name="Pereira I.A."/>
            <person name="McInerney M.J."/>
            <person name="Austin R.N."/>
            <person name="Groves J.T."/>
            <person name="Kukor J.J."/>
            <person name="Suflita J.M."/>
            <person name="Young L.Y."/>
            <person name="Zylstra G.J."/>
            <person name="Wawrik B."/>
        </authorList>
    </citation>
    <scope>NUCLEOTIDE SEQUENCE [LARGE SCALE GENOMIC DNA]</scope>
    <source>
        <strain>AK-01</strain>
    </source>
</reference>
<feature type="chain" id="PRO_1000117734" description="Tryptophan synthase alpha chain">
    <location>
        <begin position="1"/>
        <end position="265"/>
    </location>
</feature>
<feature type="active site" description="Proton acceptor" evidence="1">
    <location>
        <position position="49"/>
    </location>
</feature>
<feature type="active site" description="Proton acceptor" evidence="1">
    <location>
        <position position="60"/>
    </location>
</feature>
<sequence length="265" mass="28208">MSCIKNSFEALKAKNEKALVGFVTAGDPDFGKSVEIVKAMCEGGMDVLELGIPFSDPTADGPVIQRSSQRALSSGMSLPKVLEMVKIVRGFTKIPIVLFGYYNPIFSYGGKRFYEDALAAGADGVLIVDLPPEESAELTSLWEGDDFDFIRLVAPTTGQDRMKQIAGEASGFIYLVSMTGVTGSQGLDSSKVADVNAPLKAVTDLPVCVGFGISTPEHVKAVAAVSDGVVVGSAFERLIEENLENRGLHTMVQEYTESLKAATRG</sequence>
<evidence type="ECO:0000255" key="1">
    <source>
        <dbReference type="HAMAP-Rule" id="MF_00131"/>
    </source>
</evidence>
<comment type="function">
    <text evidence="1">The alpha subunit is responsible for the aldol cleavage of indoleglycerol phosphate to indole and glyceraldehyde 3-phosphate.</text>
</comment>
<comment type="catalytic activity">
    <reaction evidence="1">
        <text>(1S,2R)-1-C-(indol-3-yl)glycerol 3-phosphate + L-serine = D-glyceraldehyde 3-phosphate + L-tryptophan + H2O</text>
        <dbReference type="Rhea" id="RHEA:10532"/>
        <dbReference type="ChEBI" id="CHEBI:15377"/>
        <dbReference type="ChEBI" id="CHEBI:33384"/>
        <dbReference type="ChEBI" id="CHEBI:57912"/>
        <dbReference type="ChEBI" id="CHEBI:58866"/>
        <dbReference type="ChEBI" id="CHEBI:59776"/>
        <dbReference type="EC" id="4.2.1.20"/>
    </reaction>
</comment>
<comment type="pathway">
    <text evidence="1">Amino-acid biosynthesis; L-tryptophan biosynthesis; L-tryptophan from chorismate: step 5/5.</text>
</comment>
<comment type="subunit">
    <text evidence="1">Tetramer of two alpha and two beta chains.</text>
</comment>
<comment type="similarity">
    <text evidence="1">Belongs to the TrpA family.</text>
</comment>
<proteinExistence type="inferred from homology"/>